<sequence length="99" mass="10711">METLSFEFPAGQPARQRAQVGCVGSGDLEVLLEPGPAGRLNIQVVTSVNGSAERWRHLFERMFAGAEPPALNVDIHDFGATPGVVRLRLEQALEEVSNV</sequence>
<keyword id="KW-0963">Cytoplasm</keyword>
<keyword id="KW-0597">Phosphoprotein</keyword>
<proteinExistence type="inferred from homology"/>
<evidence type="ECO:0000255" key="1">
    <source>
        <dbReference type="HAMAP-Rule" id="MF_00710"/>
    </source>
</evidence>
<reference key="1">
    <citation type="journal article" date="2009" name="J. Bacteriol.">
        <title>Genome sequence of Azotobacter vinelandii, an obligate aerobe specialized to support diverse anaerobic metabolic processes.</title>
        <authorList>
            <person name="Setubal J.C."/>
            <person name="Dos Santos P."/>
            <person name="Goldman B.S."/>
            <person name="Ertesvaag H."/>
            <person name="Espin G."/>
            <person name="Rubio L.M."/>
            <person name="Valla S."/>
            <person name="Almeida N.F."/>
            <person name="Balasubramanian D."/>
            <person name="Cromes L."/>
            <person name="Curatti L."/>
            <person name="Du Z."/>
            <person name="Godsy E."/>
            <person name="Goodner B."/>
            <person name="Hellner-Burris K."/>
            <person name="Hernandez J.A."/>
            <person name="Houmiel K."/>
            <person name="Imperial J."/>
            <person name="Kennedy C."/>
            <person name="Larson T.J."/>
            <person name="Latreille P."/>
            <person name="Ligon L.S."/>
            <person name="Lu J."/>
            <person name="Maerk M."/>
            <person name="Miller N.M."/>
            <person name="Norton S."/>
            <person name="O'Carroll I.P."/>
            <person name="Paulsen I."/>
            <person name="Raulfs E.C."/>
            <person name="Roemer R."/>
            <person name="Rosser J."/>
            <person name="Segura D."/>
            <person name="Slater S."/>
            <person name="Stricklin S.L."/>
            <person name="Studholme D.J."/>
            <person name="Sun J."/>
            <person name="Viana C.J."/>
            <person name="Wallin E."/>
            <person name="Wang B."/>
            <person name="Wheeler C."/>
            <person name="Zhu H."/>
            <person name="Dean D.R."/>
            <person name="Dixon R."/>
            <person name="Wood D."/>
        </authorList>
    </citation>
    <scope>NUCLEOTIDE SEQUENCE [LARGE SCALE GENOMIC DNA]</scope>
    <source>
        <strain>DJ / ATCC BAA-1303</strain>
    </source>
</reference>
<name>MDCC_AZOVD</name>
<comment type="function">
    <text evidence="1">Subunit of malonate decarboxylase, it is an acyl carrier protein to which acetyl and malonyl thioester residues are bound via a 2'-(5''-phosphoribosyl)-3'-dephospho-CoA prosthetic group and turn over during the catalytic mechanism.</text>
</comment>
<comment type="subcellular location">
    <subcellularLocation>
        <location evidence="1">Cytoplasm</location>
    </subcellularLocation>
</comment>
<comment type="PTM">
    <text evidence="1">Covalently binds the prosthetic group of malonate decarboxylase.</text>
</comment>
<comment type="similarity">
    <text evidence="1">Belongs to the MdcC family.</text>
</comment>
<feature type="chain" id="PRO_1000212651" description="Malonate decarboxylase acyl carrier protein">
    <location>
        <begin position="1"/>
        <end position="99"/>
    </location>
</feature>
<feature type="modified residue" description="O-(phosphoribosyl dephospho-coenzyme A)serine" evidence="1">
    <location>
        <position position="25"/>
    </location>
</feature>
<organism>
    <name type="scientific">Azotobacter vinelandii (strain DJ / ATCC BAA-1303)</name>
    <dbReference type="NCBI Taxonomy" id="322710"/>
    <lineage>
        <taxon>Bacteria</taxon>
        <taxon>Pseudomonadati</taxon>
        <taxon>Pseudomonadota</taxon>
        <taxon>Gammaproteobacteria</taxon>
        <taxon>Pseudomonadales</taxon>
        <taxon>Pseudomonadaceae</taxon>
        <taxon>Azotobacter</taxon>
    </lineage>
</organism>
<accession>C1DNP6</accession>
<dbReference type="EMBL" id="CP001157">
    <property type="protein sequence ID" value="ACO77262.1"/>
    <property type="molecule type" value="Genomic_DNA"/>
</dbReference>
<dbReference type="RefSeq" id="WP_012699685.1">
    <property type="nucleotide sequence ID" value="NC_012560.1"/>
</dbReference>
<dbReference type="SMR" id="C1DNP6"/>
<dbReference type="STRING" id="322710.Avin_10300"/>
<dbReference type="EnsemblBacteria" id="ACO77262">
    <property type="protein sequence ID" value="ACO77262"/>
    <property type="gene ID" value="Avin_10300"/>
</dbReference>
<dbReference type="GeneID" id="88184378"/>
<dbReference type="KEGG" id="avn:Avin_10300"/>
<dbReference type="eggNOG" id="COG3052">
    <property type="taxonomic scope" value="Bacteria"/>
</dbReference>
<dbReference type="HOGENOM" id="CLU_173135_1_0_6"/>
<dbReference type="OrthoDB" id="120290at2"/>
<dbReference type="Proteomes" id="UP000002424">
    <property type="component" value="Chromosome"/>
</dbReference>
<dbReference type="GO" id="GO:0005737">
    <property type="term" value="C:cytoplasm"/>
    <property type="evidence" value="ECO:0007669"/>
    <property type="project" value="UniProtKB-SubCell"/>
</dbReference>
<dbReference type="GO" id="GO:0000036">
    <property type="term" value="F:acyl carrier activity"/>
    <property type="evidence" value="ECO:0007669"/>
    <property type="project" value="UniProtKB-UniRule"/>
</dbReference>
<dbReference type="HAMAP" id="MF_00710">
    <property type="entry name" value="Malonate_deCO2ase_dsu"/>
    <property type="match status" value="1"/>
</dbReference>
<dbReference type="InterPro" id="IPR023439">
    <property type="entry name" value="Mal_deCO2ase/Cit_lyase_ACP"/>
</dbReference>
<dbReference type="InterPro" id="IPR009662">
    <property type="entry name" value="Malonate_deCO2ase_dsu"/>
</dbReference>
<dbReference type="NCBIfam" id="TIGR03130">
    <property type="entry name" value="malonate_delta"/>
    <property type="match status" value="1"/>
</dbReference>
<dbReference type="NCBIfam" id="NF002293">
    <property type="entry name" value="PRK01220.1"/>
    <property type="match status" value="1"/>
</dbReference>
<dbReference type="Pfam" id="PF06857">
    <property type="entry name" value="ACP"/>
    <property type="match status" value="1"/>
</dbReference>
<protein>
    <recommendedName>
        <fullName evidence="1">Malonate decarboxylase acyl carrier protein</fullName>
    </recommendedName>
    <alternativeName>
        <fullName evidence="1">Malonate decarboxylase subunit delta</fullName>
    </alternativeName>
</protein>
<gene>
    <name evidence="1" type="primary">mdcC</name>
    <name type="ordered locus">Avin_10300</name>
</gene>